<feature type="chain" id="PRO_1000012875" description="Lysine--tRNA ligase">
    <location>
        <begin position="1"/>
        <end position="505"/>
    </location>
</feature>
<feature type="binding site" evidence="1">
    <location>
        <position position="415"/>
    </location>
    <ligand>
        <name>Mg(2+)</name>
        <dbReference type="ChEBI" id="CHEBI:18420"/>
        <label>1</label>
    </ligand>
</feature>
<feature type="binding site" evidence="1">
    <location>
        <position position="422"/>
    </location>
    <ligand>
        <name>Mg(2+)</name>
        <dbReference type="ChEBI" id="CHEBI:18420"/>
        <label>1</label>
    </ligand>
</feature>
<feature type="binding site" evidence="1">
    <location>
        <position position="422"/>
    </location>
    <ligand>
        <name>Mg(2+)</name>
        <dbReference type="ChEBI" id="CHEBI:18420"/>
        <label>2</label>
    </ligand>
</feature>
<evidence type="ECO:0000255" key="1">
    <source>
        <dbReference type="HAMAP-Rule" id="MF_00252"/>
    </source>
</evidence>
<gene>
    <name evidence="1" type="primary">lysS</name>
    <name type="ordered locus">ECA0774</name>
</gene>
<proteinExistence type="inferred from homology"/>
<keyword id="KW-0030">Aminoacyl-tRNA synthetase</keyword>
<keyword id="KW-0067">ATP-binding</keyword>
<keyword id="KW-0963">Cytoplasm</keyword>
<keyword id="KW-0436">Ligase</keyword>
<keyword id="KW-0460">Magnesium</keyword>
<keyword id="KW-0479">Metal-binding</keyword>
<keyword id="KW-0547">Nucleotide-binding</keyword>
<keyword id="KW-0648">Protein biosynthesis</keyword>
<keyword id="KW-1185">Reference proteome</keyword>
<comment type="catalytic activity">
    <reaction evidence="1">
        <text>tRNA(Lys) + L-lysine + ATP = L-lysyl-tRNA(Lys) + AMP + diphosphate</text>
        <dbReference type="Rhea" id="RHEA:20792"/>
        <dbReference type="Rhea" id="RHEA-COMP:9696"/>
        <dbReference type="Rhea" id="RHEA-COMP:9697"/>
        <dbReference type="ChEBI" id="CHEBI:30616"/>
        <dbReference type="ChEBI" id="CHEBI:32551"/>
        <dbReference type="ChEBI" id="CHEBI:33019"/>
        <dbReference type="ChEBI" id="CHEBI:78442"/>
        <dbReference type="ChEBI" id="CHEBI:78529"/>
        <dbReference type="ChEBI" id="CHEBI:456215"/>
        <dbReference type="EC" id="6.1.1.6"/>
    </reaction>
</comment>
<comment type="cofactor">
    <cofactor evidence="1">
        <name>Mg(2+)</name>
        <dbReference type="ChEBI" id="CHEBI:18420"/>
    </cofactor>
    <text evidence="1">Binds 3 Mg(2+) ions per subunit.</text>
</comment>
<comment type="subunit">
    <text evidence="1">Homodimer.</text>
</comment>
<comment type="subcellular location">
    <subcellularLocation>
        <location evidence="1">Cytoplasm</location>
    </subcellularLocation>
</comment>
<comment type="similarity">
    <text evidence="1">Belongs to the class-II aminoacyl-tRNA synthetase family.</text>
</comment>
<reference key="1">
    <citation type="journal article" date="2004" name="Proc. Natl. Acad. Sci. U.S.A.">
        <title>Genome sequence of the enterobacterial phytopathogen Erwinia carotovora subsp. atroseptica and characterization of virulence factors.</title>
        <authorList>
            <person name="Bell K.S."/>
            <person name="Sebaihia M."/>
            <person name="Pritchard L."/>
            <person name="Holden M.T.G."/>
            <person name="Hyman L.J."/>
            <person name="Holeva M.C."/>
            <person name="Thomson N.R."/>
            <person name="Bentley S.D."/>
            <person name="Churcher L.J.C."/>
            <person name="Mungall K."/>
            <person name="Atkin R."/>
            <person name="Bason N."/>
            <person name="Brooks K."/>
            <person name="Chillingworth T."/>
            <person name="Clark K."/>
            <person name="Doggett J."/>
            <person name="Fraser A."/>
            <person name="Hance Z."/>
            <person name="Hauser H."/>
            <person name="Jagels K."/>
            <person name="Moule S."/>
            <person name="Norbertczak H."/>
            <person name="Ormond D."/>
            <person name="Price C."/>
            <person name="Quail M.A."/>
            <person name="Sanders M."/>
            <person name="Walker D."/>
            <person name="Whitehead S."/>
            <person name="Salmond G.P.C."/>
            <person name="Birch P.R.J."/>
            <person name="Parkhill J."/>
            <person name="Toth I.K."/>
        </authorList>
    </citation>
    <scope>NUCLEOTIDE SEQUENCE [LARGE SCALE GENOMIC DNA]</scope>
    <source>
        <strain>SCRI 1043 / ATCC BAA-672</strain>
    </source>
</reference>
<dbReference type="EC" id="6.1.1.6" evidence="1"/>
<dbReference type="EMBL" id="BX950851">
    <property type="protein sequence ID" value="CAG73688.1"/>
    <property type="molecule type" value="Genomic_DNA"/>
</dbReference>
<dbReference type="RefSeq" id="WP_011092381.1">
    <property type="nucleotide sequence ID" value="NC_004547.2"/>
</dbReference>
<dbReference type="SMR" id="Q6D945"/>
<dbReference type="STRING" id="218491.ECA0774"/>
<dbReference type="GeneID" id="57207501"/>
<dbReference type="KEGG" id="eca:ECA0774"/>
<dbReference type="PATRIC" id="fig|218491.5.peg.770"/>
<dbReference type="eggNOG" id="COG1190">
    <property type="taxonomic scope" value="Bacteria"/>
</dbReference>
<dbReference type="HOGENOM" id="CLU_008255_6_0_6"/>
<dbReference type="OrthoDB" id="9801152at2"/>
<dbReference type="Proteomes" id="UP000007966">
    <property type="component" value="Chromosome"/>
</dbReference>
<dbReference type="GO" id="GO:0005829">
    <property type="term" value="C:cytosol"/>
    <property type="evidence" value="ECO:0007669"/>
    <property type="project" value="TreeGrafter"/>
</dbReference>
<dbReference type="GO" id="GO:0005524">
    <property type="term" value="F:ATP binding"/>
    <property type="evidence" value="ECO:0007669"/>
    <property type="project" value="UniProtKB-UniRule"/>
</dbReference>
<dbReference type="GO" id="GO:0004824">
    <property type="term" value="F:lysine-tRNA ligase activity"/>
    <property type="evidence" value="ECO:0007669"/>
    <property type="project" value="UniProtKB-UniRule"/>
</dbReference>
<dbReference type="GO" id="GO:0000287">
    <property type="term" value="F:magnesium ion binding"/>
    <property type="evidence" value="ECO:0007669"/>
    <property type="project" value="UniProtKB-UniRule"/>
</dbReference>
<dbReference type="GO" id="GO:0000049">
    <property type="term" value="F:tRNA binding"/>
    <property type="evidence" value="ECO:0007669"/>
    <property type="project" value="TreeGrafter"/>
</dbReference>
<dbReference type="GO" id="GO:0006430">
    <property type="term" value="P:lysyl-tRNA aminoacylation"/>
    <property type="evidence" value="ECO:0007669"/>
    <property type="project" value="UniProtKB-UniRule"/>
</dbReference>
<dbReference type="CDD" id="cd00775">
    <property type="entry name" value="LysRS_core"/>
    <property type="match status" value="1"/>
</dbReference>
<dbReference type="CDD" id="cd04322">
    <property type="entry name" value="LysRS_N"/>
    <property type="match status" value="1"/>
</dbReference>
<dbReference type="FunFam" id="2.40.50.140:FF:000024">
    <property type="entry name" value="Lysine--tRNA ligase"/>
    <property type="match status" value="1"/>
</dbReference>
<dbReference type="FunFam" id="3.30.930.10:FF:000001">
    <property type="entry name" value="Lysine--tRNA ligase"/>
    <property type="match status" value="1"/>
</dbReference>
<dbReference type="Gene3D" id="3.30.930.10">
    <property type="entry name" value="Bira Bifunctional Protein, Domain 2"/>
    <property type="match status" value="1"/>
</dbReference>
<dbReference type="Gene3D" id="2.40.50.140">
    <property type="entry name" value="Nucleic acid-binding proteins"/>
    <property type="match status" value="1"/>
</dbReference>
<dbReference type="HAMAP" id="MF_00252">
    <property type="entry name" value="Lys_tRNA_synth_class2"/>
    <property type="match status" value="1"/>
</dbReference>
<dbReference type="InterPro" id="IPR004364">
    <property type="entry name" value="Aa-tRNA-synt_II"/>
</dbReference>
<dbReference type="InterPro" id="IPR006195">
    <property type="entry name" value="aa-tRNA-synth_II"/>
</dbReference>
<dbReference type="InterPro" id="IPR045864">
    <property type="entry name" value="aa-tRNA-synth_II/BPL/LPL"/>
</dbReference>
<dbReference type="InterPro" id="IPR002313">
    <property type="entry name" value="Lys-tRNA-ligase_II"/>
</dbReference>
<dbReference type="InterPro" id="IPR034762">
    <property type="entry name" value="Lys-tRNA-ligase_II_bac/euk"/>
</dbReference>
<dbReference type="InterPro" id="IPR044136">
    <property type="entry name" value="Lys-tRNA-ligase_II_N"/>
</dbReference>
<dbReference type="InterPro" id="IPR018149">
    <property type="entry name" value="Lys-tRNA-synth_II_C"/>
</dbReference>
<dbReference type="InterPro" id="IPR012340">
    <property type="entry name" value="NA-bd_OB-fold"/>
</dbReference>
<dbReference type="InterPro" id="IPR004365">
    <property type="entry name" value="NA-bd_OB_tRNA"/>
</dbReference>
<dbReference type="NCBIfam" id="TIGR00499">
    <property type="entry name" value="lysS_bact"/>
    <property type="match status" value="1"/>
</dbReference>
<dbReference type="NCBIfam" id="NF001756">
    <property type="entry name" value="PRK00484.1"/>
    <property type="match status" value="1"/>
</dbReference>
<dbReference type="NCBIfam" id="NF009101">
    <property type="entry name" value="PRK12445.1"/>
    <property type="match status" value="1"/>
</dbReference>
<dbReference type="PANTHER" id="PTHR42918:SF15">
    <property type="entry name" value="LYSINE--TRNA LIGASE, CHLOROPLASTIC_MITOCHONDRIAL"/>
    <property type="match status" value="1"/>
</dbReference>
<dbReference type="PANTHER" id="PTHR42918">
    <property type="entry name" value="LYSYL-TRNA SYNTHETASE"/>
    <property type="match status" value="1"/>
</dbReference>
<dbReference type="Pfam" id="PF00152">
    <property type="entry name" value="tRNA-synt_2"/>
    <property type="match status" value="1"/>
</dbReference>
<dbReference type="Pfam" id="PF01336">
    <property type="entry name" value="tRNA_anti-codon"/>
    <property type="match status" value="1"/>
</dbReference>
<dbReference type="PIRSF" id="PIRSF039101">
    <property type="entry name" value="LysRS2"/>
    <property type="match status" value="1"/>
</dbReference>
<dbReference type="PRINTS" id="PR00982">
    <property type="entry name" value="TRNASYNTHLYS"/>
</dbReference>
<dbReference type="SUPFAM" id="SSF55681">
    <property type="entry name" value="Class II aaRS and biotin synthetases"/>
    <property type="match status" value="1"/>
</dbReference>
<dbReference type="SUPFAM" id="SSF50249">
    <property type="entry name" value="Nucleic acid-binding proteins"/>
    <property type="match status" value="1"/>
</dbReference>
<dbReference type="PROSITE" id="PS50862">
    <property type="entry name" value="AA_TRNA_LIGASE_II"/>
    <property type="match status" value="1"/>
</dbReference>
<protein>
    <recommendedName>
        <fullName evidence="1">Lysine--tRNA ligase</fullName>
        <ecNumber evidence="1">6.1.1.6</ecNumber>
    </recommendedName>
    <alternativeName>
        <fullName evidence="1">Lysyl-tRNA synthetase</fullName>
        <shortName evidence="1">LysRS</shortName>
    </alternativeName>
</protein>
<organism>
    <name type="scientific">Pectobacterium atrosepticum (strain SCRI 1043 / ATCC BAA-672)</name>
    <name type="common">Erwinia carotovora subsp. atroseptica</name>
    <dbReference type="NCBI Taxonomy" id="218491"/>
    <lineage>
        <taxon>Bacteria</taxon>
        <taxon>Pseudomonadati</taxon>
        <taxon>Pseudomonadota</taxon>
        <taxon>Gammaproteobacteria</taxon>
        <taxon>Enterobacterales</taxon>
        <taxon>Pectobacteriaceae</taxon>
        <taxon>Pectobacterium</taxon>
    </lineage>
</organism>
<name>SYK_PECAS</name>
<sequence length="505" mass="57538">MAESQSQGADQAQDLNNELKARREKLVTLRENGIAFPNDFRRDSISDHLHAEFDAKENEELEELGIEVTVAGRMMTRRIMGKASFVTLQDVGGRIQLYVSRDDLAEGIYNEQFKKWDLGDILGARGKLFKTKTGELSIHCTELRLLTKALRPLPDKFHGLADQETRYRQRYLDLIANDDSRNTFRIRSNVMAAIRRFMVDNGFMEVETPMMQVIPGGASARPFITHHNALDIDMYLRIAPELYLKRLVVGGFERVFEINRNFRNEGVSPRHNPEFTMMELYMAYADYKDLIVLTENLFRTLTQDVLGSTTVVYGDQTFDFGKPFDKLTMREAICKYRPETNVADLDDLEKATAIALSLGIKIEKSWGLGRIVTEIFEETAESSLIQPTFITEYPAEVSPLARRNDQNSEITDRFEFFIGGREIGNGFSELNDAEDQAERFAQQVNAKDAGDDEAMFYDEDYVTALEHGLPPTAGLGIGIDRMVMLFTNSHTIRDVILFPAMRPQK</sequence>
<accession>Q6D945</accession>